<evidence type="ECO:0000255" key="1">
    <source>
        <dbReference type="HAMAP-Rule" id="MF_01702"/>
    </source>
</evidence>
<accession>P63374</accession>
<accession>Q8DPB5</accession>
<accession>Q97Q35</accession>
<proteinExistence type="inferred from homology"/>
<organism>
    <name type="scientific">Streptococcus pneumoniae (strain ATCC BAA-255 / R6)</name>
    <dbReference type="NCBI Taxonomy" id="171101"/>
    <lineage>
        <taxon>Bacteria</taxon>
        <taxon>Bacillati</taxon>
        <taxon>Bacillota</taxon>
        <taxon>Bacilli</taxon>
        <taxon>Lactobacillales</taxon>
        <taxon>Streptococcaceae</taxon>
        <taxon>Streptococcus</taxon>
    </lineage>
</organism>
<name>PSTB1_STRR6</name>
<feature type="chain" id="PRO_0000092900" description="Phosphate import ATP-binding protein PstB 1">
    <location>
        <begin position="1"/>
        <end position="252"/>
    </location>
</feature>
<feature type="domain" description="ABC transporter" evidence="1">
    <location>
        <begin position="6"/>
        <end position="247"/>
    </location>
</feature>
<feature type="binding site" evidence="1">
    <location>
        <begin position="38"/>
        <end position="45"/>
    </location>
    <ligand>
        <name>ATP</name>
        <dbReference type="ChEBI" id="CHEBI:30616"/>
    </ligand>
</feature>
<comment type="function">
    <text evidence="1">Part of the ABC transporter complex PstSACB involved in phosphate import. Responsible for energy coupling to the transport system.</text>
</comment>
<comment type="catalytic activity">
    <reaction evidence="1">
        <text>phosphate(out) + ATP + H2O = ADP + 2 phosphate(in) + H(+)</text>
        <dbReference type="Rhea" id="RHEA:24440"/>
        <dbReference type="ChEBI" id="CHEBI:15377"/>
        <dbReference type="ChEBI" id="CHEBI:15378"/>
        <dbReference type="ChEBI" id="CHEBI:30616"/>
        <dbReference type="ChEBI" id="CHEBI:43474"/>
        <dbReference type="ChEBI" id="CHEBI:456216"/>
        <dbReference type="EC" id="7.3.2.1"/>
    </reaction>
</comment>
<comment type="subunit">
    <text evidence="1">The complex is composed of two ATP-binding proteins (PstB), two transmembrane proteins (PstC and PstA) and a solute-binding protein (PstS).</text>
</comment>
<comment type="subcellular location">
    <subcellularLocation>
        <location evidence="1">Cell membrane</location>
        <topology evidence="1">Peripheral membrane protein</topology>
    </subcellularLocation>
</comment>
<comment type="similarity">
    <text evidence="1">Belongs to the ABC transporter superfamily. Phosphate importer (TC 3.A.1.7) family.</text>
</comment>
<dbReference type="EC" id="7.3.2.1" evidence="1"/>
<dbReference type="EMBL" id="AE007317">
    <property type="protein sequence ID" value="AAL00057.1"/>
    <property type="molecule type" value="Genomic_DNA"/>
</dbReference>
<dbReference type="PIR" id="D98028">
    <property type="entry name" value="D98028"/>
</dbReference>
<dbReference type="RefSeq" id="NP_358846.1">
    <property type="nucleotide sequence ID" value="NC_003098.1"/>
</dbReference>
<dbReference type="SMR" id="P63374"/>
<dbReference type="STRING" id="171101.spr1253"/>
<dbReference type="KEGG" id="spr:spr1253"/>
<dbReference type="PATRIC" id="fig|171101.6.peg.1359"/>
<dbReference type="eggNOG" id="COG1117">
    <property type="taxonomic scope" value="Bacteria"/>
</dbReference>
<dbReference type="HOGENOM" id="CLU_000604_1_22_9"/>
<dbReference type="Proteomes" id="UP000000586">
    <property type="component" value="Chromosome"/>
</dbReference>
<dbReference type="GO" id="GO:0005886">
    <property type="term" value="C:plasma membrane"/>
    <property type="evidence" value="ECO:0007669"/>
    <property type="project" value="UniProtKB-SubCell"/>
</dbReference>
<dbReference type="GO" id="GO:0005524">
    <property type="term" value="F:ATP binding"/>
    <property type="evidence" value="ECO:0007669"/>
    <property type="project" value="UniProtKB-KW"/>
</dbReference>
<dbReference type="GO" id="GO:0016887">
    <property type="term" value="F:ATP hydrolysis activity"/>
    <property type="evidence" value="ECO:0007669"/>
    <property type="project" value="InterPro"/>
</dbReference>
<dbReference type="GO" id="GO:0015415">
    <property type="term" value="F:ATPase-coupled phosphate ion transmembrane transporter activity"/>
    <property type="evidence" value="ECO:0007669"/>
    <property type="project" value="UniProtKB-EC"/>
</dbReference>
<dbReference type="GO" id="GO:0035435">
    <property type="term" value="P:phosphate ion transmembrane transport"/>
    <property type="evidence" value="ECO:0007669"/>
    <property type="project" value="InterPro"/>
</dbReference>
<dbReference type="CDD" id="cd03260">
    <property type="entry name" value="ABC_PstB_phosphate_transporter"/>
    <property type="match status" value="1"/>
</dbReference>
<dbReference type="Gene3D" id="3.40.50.300">
    <property type="entry name" value="P-loop containing nucleotide triphosphate hydrolases"/>
    <property type="match status" value="1"/>
</dbReference>
<dbReference type="InterPro" id="IPR003593">
    <property type="entry name" value="AAA+_ATPase"/>
</dbReference>
<dbReference type="InterPro" id="IPR003439">
    <property type="entry name" value="ABC_transporter-like_ATP-bd"/>
</dbReference>
<dbReference type="InterPro" id="IPR017871">
    <property type="entry name" value="ABC_transporter-like_CS"/>
</dbReference>
<dbReference type="InterPro" id="IPR027417">
    <property type="entry name" value="P-loop_NTPase"/>
</dbReference>
<dbReference type="InterPro" id="IPR005670">
    <property type="entry name" value="PstB-like"/>
</dbReference>
<dbReference type="NCBIfam" id="TIGR00972">
    <property type="entry name" value="3a0107s01c2"/>
    <property type="match status" value="1"/>
</dbReference>
<dbReference type="PANTHER" id="PTHR43423">
    <property type="entry name" value="ABC TRANSPORTER I FAMILY MEMBER 17"/>
    <property type="match status" value="1"/>
</dbReference>
<dbReference type="PANTHER" id="PTHR43423:SF1">
    <property type="entry name" value="ABC TRANSPORTER I FAMILY MEMBER 17"/>
    <property type="match status" value="1"/>
</dbReference>
<dbReference type="Pfam" id="PF00005">
    <property type="entry name" value="ABC_tran"/>
    <property type="match status" value="1"/>
</dbReference>
<dbReference type="SMART" id="SM00382">
    <property type="entry name" value="AAA"/>
    <property type="match status" value="1"/>
</dbReference>
<dbReference type="SUPFAM" id="SSF52540">
    <property type="entry name" value="P-loop containing nucleoside triphosphate hydrolases"/>
    <property type="match status" value="1"/>
</dbReference>
<dbReference type="PROSITE" id="PS00211">
    <property type="entry name" value="ABC_TRANSPORTER_1"/>
    <property type="match status" value="1"/>
</dbReference>
<dbReference type="PROSITE" id="PS50893">
    <property type="entry name" value="ABC_TRANSPORTER_2"/>
    <property type="match status" value="1"/>
</dbReference>
<dbReference type="PROSITE" id="PS51238">
    <property type="entry name" value="PSTB"/>
    <property type="match status" value="1"/>
</dbReference>
<sequence>MTDAILQVSDLSVYYNKKKALNSVSLSFQPKEITALIGPSGSGKSTLLKSLNRMGDLNPEVTTTGSVVYNGHNIYSPRTDTVELRKEIGMVFQQPNPFPMTIYENVVYGLRINGIKDKQVLDEAVEKALQGASIWDEVKDRLYDSAIGLSGGQQQRVCVARVLATSPKIILLDEPTSALDPISAGKIEETLYGLKDKYTMLLVTRSMQQASRISDKTGFFLDGDLIEFNDTKQMFLDPQHKETEDYITGKFG</sequence>
<reference key="1">
    <citation type="journal article" date="2001" name="J. Bacteriol.">
        <title>Genome of the bacterium Streptococcus pneumoniae strain R6.</title>
        <authorList>
            <person name="Hoskins J."/>
            <person name="Alborn W.E. Jr."/>
            <person name="Arnold J."/>
            <person name="Blaszczak L.C."/>
            <person name="Burgett S."/>
            <person name="DeHoff B.S."/>
            <person name="Estrem S.T."/>
            <person name="Fritz L."/>
            <person name="Fu D.-J."/>
            <person name="Fuller W."/>
            <person name="Geringer C."/>
            <person name="Gilmour R."/>
            <person name="Glass J.S."/>
            <person name="Khoja H."/>
            <person name="Kraft A.R."/>
            <person name="Lagace R.E."/>
            <person name="LeBlanc D.J."/>
            <person name="Lee L.N."/>
            <person name="Lefkowitz E.J."/>
            <person name="Lu J."/>
            <person name="Matsushima P."/>
            <person name="McAhren S.M."/>
            <person name="McHenney M."/>
            <person name="McLeaster K."/>
            <person name="Mundy C.W."/>
            <person name="Nicas T.I."/>
            <person name="Norris F.H."/>
            <person name="O'Gara M."/>
            <person name="Peery R.B."/>
            <person name="Robertson G.T."/>
            <person name="Rockey P."/>
            <person name="Sun P.-M."/>
            <person name="Winkler M.E."/>
            <person name="Yang Y."/>
            <person name="Young-Bellido M."/>
            <person name="Zhao G."/>
            <person name="Zook C.A."/>
            <person name="Baltz R.H."/>
            <person name="Jaskunas S.R."/>
            <person name="Rosteck P.R. Jr."/>
            <person name="Skatrud P.L."/>
            <person name="Glass J.I."/>
        </authorList>
    </citation>
    <scope>NUCLEOTIDE SEQUENCE [LARGE SCALE GENOMIC DNA]</scope>
    <source>
        <strain>ATCC BAA-255 / R6</strain>
    </source>
</reference>
<protein>
    <recommendedName>
        <fullName evidence="1">Phosphate import ATP-binding protein PstB 1</fullName>
        <ecNumber evidence="1">7.3.2.1</ecNumber>
    </recommendedName>
    <alternativeName>
        <fullName evidence="1">ABC phosphate transporter 1</fullName>
    </alternativeName>
    <alternativeName>
        <fullName evidence="1">Phosphate-transporting ATPase 1</fullName>
    </alternativeName>
</protein>
<keyword id="KW-0067">ATP-binding</keyword>
<keyword id="KW-1003">Cell membrane</keyword>
<keyword id="KW-0472">Membrane</keyword>
<keyword id="KW-0547">Nucleotide-binding</keyword>
<keyword id="KW-0592">Phosphate transport</keyword>
<keyword id="KW-1185">Reference proteome</keyword>
<keyword id="KW-1278">Translocase</keyword>
<keyword id="KW-0813">Transport</keyword>
<gene>
    <name evidence="1" type="primary">pstB1</name>
    <name type="ordered locus">spr1253</name>
</gene>